<protein>
    <recommendedName>
        <fullName evidence="3">Voltage-gated inwardly rectifying potassium channel KCNH2</fullName>
    </recommendedName>
    <alternativeName>
        <fullName>Ether-a-go-go-related gene potassium channel 1</fullName>
        <shortName>ERG-1</shortName>
        <shortName>Eag-related protein 1</shortName>
        <shortName>Ether-a-go-go-related protein 1</shortName>
        <shortName>gp-erg</shortName>
    </alternativeName>
    <alternativeName>
        <fullName>Potassium voltage-gated channel subfamily H member 2</fullName>
    </alternativeName>
    <alternativeName>
        <fullName>Voltage-gated potassium channel subunit Kv11.1</fullName>
    </alternativeName>
</protein>
<accession>O08703</accession>
<accession>H0VZT8</accession>
<name>KCNH2_CAVPO</name>
<reference key="1">
    <citation type="journal article" date="2011" name="Nature">
        <title>A high-resolution map of human evolutionary constraint using 29 mammals.</title>
        <authorList>
            <person name="Lindblad-Toh K."/>
            <person name="Garber M."/>
            <person name="Zuk O."/>
            <person name="Lin M.F."/>
            <person name="Parker B.J."/>
            <person name="Washietl S."/>
            <person name="Kheradpour P."/>
            <person name="Ernst J."/>
            <person name="Jordan G."/>
            <person name="Mauceli E."/>
            <person name="Ward L.D."/>
            <person name="Lowe C.B."/>
            <person name="Holloway A.K."/>
            <person name="Clamp M."/>
            <person name="Gnerre S."/>
            <person name="Alfoldi J."/>
            <person name="Beal K."/>
            <person name="Chang J."/>
            <person name="Clawson H."/>
            <person name="Cuff J."/>
            <person name="Di Palma F."/>
            <person name="Fitzgerald S."/>
            <person name="Flicek P."/>
            <person name="Guttman M."/>
            <person name="Hubisz M.J."/>
            <person name="Jaffe D.B."/>
            <person name="Jungreis I."/>
            <person name="Kent W.J."/>
            <person name="Kostka D."/>
            <person name="Lara M."/>
            <person name="Martins A.L."/>
            <person name="Massingham T."/>
            <person name="Moltke I."/>
            <person name="Raney B.J."/>
            <person name="Rasmussen M.D."/>
            <person name="Robinson J."/>
            <person name="Stark A."/>
            <person name="Vilella A.J."/>
            <person name="Wen J."/>
            <person name="Xie X."/>
            <person name="Zody M.C."/>
            <person name="Baldwin J."/>
            <person name="Bloom T."/>
            <person name="Chin C.W."/>
            <person name="Heiman D."/>
            <person name="Nicol R."/>
            <person name="Nusbaum C."/>
            <person name="Young S."/>
            <person name="Wilkinson J."/>
            <person name="Worley K.C."/>
            <person name="Kovar C.L."/>
            <person name="Muzny D.M."/>
            <person name="Gibbs R.A."/>
            <person name="Cree A."/>
            <person name="Dihn H.H."/>
            <person name="Fowler G."/>
            <person name="Jhangiani S."/>
            <person name="Joshi V."/>
            <person name="Lee S."/>
            <person name="Lewis L.R."/>
            <person name="Nazareth L.V."/>
            <person name="Okwuonu G."/>
            <person name="Santibanez J."/>
            <person name="Warren W.C."/>
            <person name="Mardis E.R."/>
            <person name="Weinstock G.M."/>
            <person name="Wilson R.K."/>
            <person name="Delehaunty K."/>
            <person name="Dooling D."/>
            <person name="Fronik C."/>
            <person name="Fulton L."/>
            <person name="Fulton B."/>
            <person name="Graves T."/>
            <person name="Minx P."/>
            <person name="Sodergren E."/>
            <person name="Birney E."/>
            <person name="Margulies E.H."/>
            <person name="Herrero J."/>
            <person name="Green E.D."/>
            <person name="Haussler D."/>
            <person name="Siepel A."/>
            <person name="Goldman N."/>
            <person name="Pollard K.S."/>
            <person name="Pedersen J.S."/>
            <person name="Lander E.S."/>
            <person name="Kellis M."/>
        </authorList>
    </citation>
    <scope>NUCLEOTIDE SEQUENCE [LARGE SCALE GENOMIC DNA]</scope>
    <source>
        <strain>2N</strain>
    </source>
</reference>
<reference key="2">
    <citation type="journal article" date="1997" name="Circ. Res.">
        <title>Tissue and species distribution of mRNA for the IKr-like K+ channel, erg.</title>
        <authorList>
            <person name="Wymore R.S."/>
            <person name="Gintant G.A."/>
            <person name="Wymore R.T."/>
            <person name="Dixon J.E."/>
            <person name="McKinnon D."/>
            <person name="Cohen I.S."/>
        </authorList>
    </citation>
    <scope>NUCLEOTIDE SEQUENCE [MRNA] OF 1133-1294</scope>
    <scope>TISSUE SPECIFICITY</scope>
    <source>
        <tissue>Heart</tissue>
    </source>
</reference>
<proteinExistence type="evidence at transcript level"/>
<sequence>RKFIIANARVENCAVIYCNDGFCELCGYSRAEVMQRPCTCDFLHGPRTQRRAAAQIAQALLGAEERKVEIAFYRKDGSCFLCLVDVVPVKNEDGAVIMFILNFEVVMEKDMVGSPARDTNHRGPPTSWLTPGRAKTFRLKLPALLALTTRESSSVRPGGTGGSGAPGAVVVDVDLTPAAPSSESLALDEVSALDNHVAGPAEERRALVAPGSPPSSVPGPPHTSPRAHSLNPDASGSSCSLARTRSRESCASVRRASSADDIEAMRAGALPPPPRHASTGAMHPLRSGLLNSTSDSDLVRYRTISKIPQITLNFVDLKGDPFLASPTSDREIIAPKIKERTHNVTEKVTQVLSLGADVLPEYKLQAPRIHRWTILHYSPFKAVWDWLILLLVIYTAVFTPYSAAFLLKEPEEDAQTADCGYACQPLAVVDLIVDIMFIVDILINFRTTYVNANEEVVSHPGRIAVHYFKGWFLIDMVAAIPFDLLIFGSGSEELIGLLKTARLLRLVRVARKLDRYSEYGAAVLFLLMCTFALIAHWLACIWYAIGNMEQPDMNSRIGWLHNLGDQIGKPYNSSGLGGPSIKDKYVTALYFTFSSLTSVGFGNVSPNTNSEKIFSICVMLIGSLMYASIFGNVSAIIQRLYSGTARYHTQMLRVREFIRFHQIPNPLRQRLEEYFQHAWSYTNGIDMNAVLKGFPECLQADICLHLNRSLLQHCKPFRGATKGCLRALAMKFKTTHAPPGDTLVHAGDLLTALYFISRGSIEILRGDVVVAILGKNDIFGEPLNLYARPGKSNGDVRALTYCDLHKIHRDDLLEVLDMYPEFSDHFWSSLEITFNLRDTNMIPGSPGSTELEGGFNRQRRRKLSFRRRTDKDPEQPGEVPALGPARVGAGPSSWGRPGTPWGDSPSSGPSSPESSEDEGQGRSSSPLRLVPFSSPRPPGEPRGAETLTEDGDKSDTCNPLSGAFSGVSNIFSFWGDSRGRQYQELPRCPAPAPSLLNIPLSSPGRRPRGDVESRLDALQRQLNRLETRLSADMATVLQLLQRQMTLVPPAYSAVTTPGPGPASTSPLLPISPIPTLTLDSLSQVSQFVAFEELPPGAPELPQDGPTRRLSLPGQLGALTSQPLHRHGSDPGSAVWDWLILLLVIYTAVFTPYSAAFLLKEPEEDAQTADCGYACQPLAVVDLIVDIMFIVDILINFRTTYVNANEEVVSHPGRIAVHYFKGWFLIDMVAAIPFDLLIFGSGSEELIGLLKTARLLRLVRVARKLDRYSEYGAAVLFLLMCTFALIAHWLACIWY</sequence>
<organism>
    <name type="scientific">Cavia porcellus</name>
    <name type="common">Guinea pig</name>
    <dbReference type="NCBI Taxonomy" id="10141"/>
    <lineage>
        <taxon>Eukaryota</taxon>
        <taxon>Metazoa</taxon>
        <taxon>Chordata</taxon>
        <taxon>Craniata</taxon>
        <taxon>Vertebrata</taxon>
        <taxon>Euteleostomi</taxon>
        <taxon>Mammalia</taxon>
        <taxon>Eutheria</taxon>
        <taxon>Euarchontoglires</taxon>
        <taxon>Glires</taxon>
        <taxon>Rodentia</taxon>
        <taxon>Hystricomorpha</taxon>
        <taxon>Caviidae</taxon>
        <taxon>Cavia</taxon>
    </lineage>
</organism>
<gene>
    <name evidence="3" type="primary">KCNH2</name>
    <name type="synonym">ERG</name>
</gene>
<feature type="chain" id="PRO_0000053998" description="Voltage-gated inwardly rectifying potassium channel KCNH2">
    <location>
        <begin position="1" status="less than"/>
        <end position="1294" status="greater than"/>
    </location>
</feature>
<feature type="topological domain" description="Cytoplasmic" evidence="11">
    <location>
        <begin position="1"/>
        <end position="377"/>
    </location>
</feature>
<feature type="transmembrane region" description="Helical; Name=Segment S1" evidence="5">
    <location>
        <begin position="378"/>
        <end position="398"/>
    </location>
</feature>
<feature type="topological domain" description="Extracellular" evidence="11">
    <location>
        <begin position="399"/>
        <end position="424"/>
    </location>
</feature>
<feature type="transmembrane region" description="Helical; Name=Segment S2" evidence="5">
    <location>
        <begin position="425"/>
        <end position="445"/>
    </location>
</feature>
<feature type="topological domain" description="Cytoplasmic" evidence="11">
    <location>
        <begin position="446"/>
        <end position="469"/>
    </location>
</feature>
<feature type="transmembrane region" description="Helical; Name=Segment S3" evidence="5">
    <location>
        <begin position="470"/>
        <end position="490"/>
    </location>
</feature>
<feature type="topological domain" description="Extracellular" evidence="11">
    <location>
        <begin position="491"/>
        <end position="494"/>
    </location>
</feature>
<feature type="transmembrane region" description="Helical; Voltage-sensor; Name=Segment S4" evidence="5">
    <location>
        <begin position="495"/>
        <end position="515"/>
    </location>
</feature>
<feature type="topological domain" description="Cytoplasmic" evidence="11">
    <location>
        <begin position="516"/>
        <end position="521"/>
    </location>
</feature>
<feature type="transmembrane region" description="Helical; Name=Segment S5" evidence="5">
    <location>
        <begin position="522"/>
        <end position="542"/>
    </location>
</feature>
<feature type="topological domain" description="Extracellular" evidence="11">
    <location>
        <begin position="543"/>
        <end position="585"/>
    </location>
</feature>
<feature type="intramembrane region" description="Pore-forming; Name=Segment H5" evidence="5">
    <location>
        <begin position="586"/>
        <end position="606"/>
    </location>
</feature>
<feature type="topological domain" description="Extracellular" evidence="11">
    <location>
        <begin position="607"/>
        <end position="612"/>
    </location>
</feature>
<feature type="transmembrane region" description="Helical; Name=Segment S6" evidence="5">
    <location>
        <begin position="613"/>
        <end position="633"/>
    </location>
</feature>
<feature type="topological domain" description="Cytoplasmic" evidence="11">
    <location>
        <begin position="634"/>
        <end position="1294"/>
    </location>
</feature>
<feature type="domain" description="PAS" evidence="7">
    <location>
        <begin position="15"/>
        <end position="44"/>
    </location>
</feature>
<feature type="domain" description="PAC" evidence="8">
    <location>
        <begin position="66"/>
        <end position="118"/>
    </location>
</feature>
<feature type="region of interest" description="Disordered" evidence="9">
    <location>
        <begin position="207"/>
        <end position="258"/>
    </location>
</feature>
<feature type="region of interest" description="cNMP-binding domain" evidence="6">
    <location>
        <begin position="716"/>
        <end position="816"/>
    </location>
</feature>
<feature type="region of interest" description="Disordered" evidence="9">
    <location>
        <begin position="844"/>
        <end position="956"/>
    </location>
</feature>
<feature type="coiled-coil region" evidence="5">
    <location>
        <begin position="1008"/>
        <end position="1035"/>
    </location>
</feature>
<feature type="short sequence motif" description="Selectivity filter" evidence="4">
    <location>
        <begin position="598"/>
        <end position="603"/>
    </location>
</feature>
<feature type="compositionally biased region" description="Pro residues" evidence="9">
    <location>
        <begin position="211"/>
        <end position="223"/>
    </location>
</feature>
<feature type="compositionally biased region" description="Polar residues" evidence="9">
    <location>
        <begin position="232"/>
        <end position="243"/>
    </location>
</feature>
<feature type="compositionally biased region" description="Basic residues" evidence="9">
    <location>
        <begin position="857"/>
        <end position="866"/>
    </location>
</feature>
<feature type="compositionally biased region" description="Low complexity" evidence="9">
    <location>
        <begin position="902"/>
        <end position="913"/>
    </location>
</feature>
<feature type="modified residue" description="Phosphoserine" evidence="3">
    <location>
        <position position="212"/>
    </location>
</feature>
<feature type="modified residue" description="Phosphoserine" evidence="2">
    <location>
        <position position="216"/>
    </location>
</feature>
<feature type="modified residue" description="Phosphoserine" evidence="2">
    <location>
        <position position="257"/>
    </location>
</feature>
<feature type="modified residue" description="Phosphoserine" evidence="2">
    <location>
        <position position="258"/>
    </location>
</feature>
<feature type="modified residue" description="Phosphoserine" evidence="3">
    <location>
        <position position="294"/>
    </location>
</feature>
<feature type="modified residue" description="Phosphoserine" evidence="1">
    <location>
        <position position="325"/>
    </location>
</feature>
<feature type="modified residue" description="Phosphoserine" evidence="3">
    <location>
        <position position="845"/>
    </location>
</feature>
<feature type="modified residue" description="Phosphoserine" evidence="2">
    <location>
        <position position="848"/>
    </location>
</feature>
<feature type="modified residue" description="Omega-N-methylarginine" evidence="2">
    <location>
        <position position="987"/>
    </location>
</feature>
<feature type="modified residue" description="Phosphoserine" evidence="3">
    <location>
        <position position="1110"/>
    </location>
</feature>
<feature type="non-terminal residue">
    <location>
        <position position="1"/>
    </location>
</feature>
<feature type="non-terminal residue">
    <location>
        <position position="1294"/>
    </location>
</feature>
<evidence type="ECO:0000250" key="1">
    <source>
        <dbReference type="UniProtKB" id="O08962"/>
    </source>
</evidence>
<evidence type="ECO:0000250" key="2">
    <source>
        <dbReference type="UniProtKB" id="O35219"/>
    </source>
</evidence>
<evidence type="ECO:0000250" key="3">
    <source>
        <dbReference type="UniProtKB" id="Q12809"/>
    </source>
</evidence>
<evidence type="ECO:0000250" key="4">
    <source>
        <dbReference type="UniProtKB" id="Q63472"/>
    </source>
</evidence>
<evidence type="ECO:0000255" key="5"/>
<evidence type="ECO:0000255" key="6">
    <source>
        <dbReference type="PROSITE-ProRule" id="PRU00060"/>
    </source>
</evidence>
<evidence type="ECO:0000255" key="7">
    <source>
        <dbReference type="PROSITE-ProRule" id="PRU00140"/>
    </source>
</evidence>
<evidence type="ECO:0000255" key="8">
    <source>
        <dbReference type="PROSITE-ProRule" id="PRU00141"/>
    </source>
</evidence>
<evidence type="ECO:0000256" key="9">
    <source>
        <dbReference type="SAM" id="MobiDB-lite"/>
    </source>
</evidence>
<evidence type="ECO:0000269" key="10">
    <source>
    </source>
</evidence>
<evidence type="ECO:0000305" key="11"/>
<keyword id="KW-1003">Cell membrane</keyword>
<keyword id="KW-0175">Coiled coil</keyword>
<keyword id="KW-0407">Ion channel</keyword>
<keyword id="KW-0406">Ion transport</keyword>
<keyword id="KW-0472">Membrane</keyword>
<keyword id="KW-0488">Methylation</keyword>
<keyword id="KW-0597">Phosphoprotein</keyword>
<keyword id="KW-0630">Potassium</keyword>
<keyword id="KW-0631">Potassium channel</keyword>
<keyword id="KW-0633">Potassium transport</keyword>
<keyword id="KW-1185">Reference proteome</keyword>
<keyword id="KW-0812">Transmembrane</keyword>
<keyword id="KW-1133">Transmembrane helix</keyword>
<keyword id="KW-0813">Transport</keyword>
<keyword id="KW-0851">Voltage-gated channel</keyword>
<dbReference type="EMBL" id="AAKN02032924">
    <property type="status" value="NOT_ANNOTATED_CDS"/>
    <property type="molecule type" value="Genomic_DNA"/>
</dbReference>
<dbReference type="EMBL" id="U75211">
    <property type="protein sequence ID" value="AAC53159.1"/>
    <property type="molecule type" value="mRNA"/>
</dbReference>
<dbReference type="BMRB" id="O08703"/>
<dbReference type="SMR" id="O08703"/>
<dbReference type="STRING" id="10141.ENSCPOP00000016222"/>
<dbReference type="BindingDB" id="O08703"/>
<dbReference type="ChEMBL" id="CHEMBL5557"/>
<dbReference type="DrugCentral" id="O08703"/>
<dbReference type="VEuPathDB" id="HostDB:ENSCPOG00000022750"/>
<dbReference type="eggNOG" id="KOG0498">
    <property type="taxonomic scope" value="Eukaryota"/>
</dbReference>
<dbReference type="HOGENOM" id="CLU_005746_2_0_1"/>
<dbReference type="InParanoid" id="O08703"/>
<dbReference type="OMA" id="CHNRHAS"/>
<dbReference type="Proteomes" id="UP000005447">
    <property type="component" value="Unassembled WGS sequence"/>
</dbReference>
<dbReference type="Bgee" id="ENSCPOG00000022750">
    <property type="expression patterns" value="Expressed in heart and 11 other cell types or tissues"/>
</dbReference>
<dbReference type="GO" id="GO:0009986">
    <property type="term" value="C:cell surface"/>
    <property type="evidence" value="ECO:0007669"/>
    <property type="project" value="Ensembl"/>
</dbReference>
<dbReference type="GO" id="GO:1902937">
    <property type="term" value="C:inward rectifier potassium channel complex"/>
    <property type="evidence" value="ECO:0007669"/>
    <property type="project" value="Ensembl"/>
</dbReference>
<dbReference type="GO" id="GO:0048471">
    <property type="term" value="C:perinuclear region of cytoplasm"/>
    <property type="evidence" value="ECO:0007669"/>
    <property type="project" value="Ensembl"/>
</dbReference>
<dbReference type="GO" id="GO:0005251">
    <property type="term" value="F:delayed rectifier potassium channel activity"/>
    <property type="evidence" value="ECO:0007669"/>
    <property type="project" value="Ensembl"/>
</dbReference>
<dbReference type="GO" id="GO:0005242">
    <property type="term" value="F:inward rectifier potassium channel activity"/>
    <property type="evidence" value="ECO:0007669"/>
    <property type="project" value="Ensembl"/>
</dbReference>
<dbReference type="GO" id="GO:0042803">
    <property type="term" value="F:protein homodimerization activity"/>
    <property type="evidence" value="ECO:0007669"/>
    <property type="project" value="Ensembl"/>
</dbReference>
<dbReference type="GO" id="GO:0097110">
    <property type="term" value="F:scaffold protein binding"/>
    <property type="evidence" value="ECO:0007669"/>
    <property type="project" value="Ensembl"/>
</dbReference>
<dbReference type="GO" id="GO:0000976">
    <property type="term" value="F:transcription cis-regulatory region binding"/>
    <property type="evidence" value="ECO:0007669"/>
    <property type="project" value="Ensembl"/>
</dbReference>
<dbReference type="GO" id="GO:0031625">
    <property type="term" value="F:ubiquitin protein ligase binding"/>
    <property type="evidence" value="ECO:0000353"/>
    <property type="project" value="BHF-UCL"/>
</dbReference>
<dbReference type="GO" id="GO:0005249">
    <property type="term" value="F:voltage-gated potassium channel activity"/>
    <property type="evidence" value="ECO:0000250"/>
    <property type="project" value="UniProtKB"/>
</dbReference>
<dbReference type="GO" id="GO:1902282">
    <property type="term" value="F:voltage-gated potassium channel activity involved in ventricular cardiac muscle cell action potential repolarization"/>
    <property type="evidence" value="ECO:0007669"/>
    <property type="project" value="Ensembl"/>
</dbReference>
<dbReference type="GO" id="GO:0071466">
    <property type="term" value="P:cellular response to xenobiotic stimulus"/>
    <property type="evidence" value="ECO:0007669"/>
    <property type="project" value="Ensembl"/>
</dbReference>
<dbReference type="GO" id="GO:0086010">
    <property type="term" value="P:membrane depolarization during action potential"/>
    <property type="evidence" value="ECO:0007669"/>
    <property type="project" value="Ensembl"/>
</dbReference>
<dbReference type="GO" id="GO:1903765">
    <property type="term" value="P:negative regulation of potassium ion export across plasma membrane"/>
    <property type="evidence" value="ECO:0007669"/>
    <property type="project" value="Ensembl"/>
</dbReference>
<dbReference type="GO" id="GO:0045893">
    <property type="term" value="P:positive regulation of DNA-templated transcription"/>
    <property type="evidence" value="ECO:0007669"/>
    <property type="project" value="Ensembl"/>
</dbReference>
<dbReference type="GO" id="GO:1901381">
    <property type="term" value="P:positive regulation of potassium ion transmembrane transport"/>
    <property type="evidence" value="ECO:0007669"/>
    <property type="project" value="Ensembl"/>
</dbReference>
<dbReference type="GO" id="GO:0097623">
    <property type="term" value="P:potassium ion export across plasma membrane"/>
    <property type="evidence" value="ECO:0007669"/>
    <property type="project" value="Ensembl"/>
</dbReference>
<dbReference type="GO" id="GO:0055075">
    <property type="term" value="P:potassium ion homeostasis"/>
    <property type="evidence" value="ECO:0007669"/>
    <property type="project" value="Ensembl"/>
</dbReference>
<dbReference type="GO" id="GO:1990573">
    <property type="term" value="P:potassium ion import across plasma membrane"/>
    <property type="evidence" value="ECO:0007669"/>
    <property type="project" value="Ensembl"/>
</dbReference>
<dbReference type="GO" id="GO:0086091">
    <property type="term" value="P:regulation of heart rate by cardiac conduction"/>
    <property type="evidence" value="ECO:0007669"/>
    <property type="project" value="Ensembl"/>
</dbReference>
<dbReference type="GO" id="GO:0060307">
    <property type="term" value="P:regulation of ventricular cardiac muscle cell membrane repolarization"/>
    <property type="evidence" value="ECO:0007669"/>
    <property type="project" value="Ensembl"/>
</dbReference>
<dbReference type="CDD" id="cd00038">
    <property type="entry name" value="CAP_ED"/>
    <property type="match status" value="1"/>
</dbReference>
<dbReference type="CDD" id="cd00130">
    <property type="entry name" value="PAS"/>
    <property type="match status" value="1"/>
</dbReference>
<dbReference type="FunFam" id="1.10.287.70:FF:000020">
    <property type="entry name" value="Potassium channel, voltage-gated eag-related subfamily H, member 7"/>
    <property type="match status" value="1"/>
</dbReference>
<dbReference type="FunFam" id="2.60.120.10:FF:000011">
    <property type="entry name" value="Potassium channel, voltage-gated eag-related subfamily H, member 7"/>
    <property type="match status" value="1"/>
</dbReference>
<dbReference type="FunFam" id="1.10.287.70:FF:000386">
    <property type="entry name" value="Potassium voltage-gated channel subfamily H member 2"/>
    <property type="match status" value="1"/>
</dbReference>
<dbReference type="FunFam" id="1.10.1200.260:FF:000001">
    <property type="entry name" value="Potassium voltage-gated channel subfamily H member 7"/>
    <property type="match status" value="1"/>
</dbReference>
<dbReference type="FunFam" id="3.30.450.20:FF:000001">
    <property type="entry name" value="Potassium voltage-gated channel subfamily H member 7"/>
    <property type="match status" value="1"/>
</dbReference>
<dbReference type="Gene3D" id="1.10.1200.260">
    <property type="match status" value="1"/>
</dbReference>
<dbReference type="Gene3D" id="1.10.287.70">
    <property type="match status" value="2"/>
</dbReference>
<dbReference type="Gene3D" id="2.60.120.10">
    <property type="entry name" value="Jelly Rolls"/>
    <property type="match status" value="1"/>
</dbReference>
<dbReference type="Gene3D" id="3.30.450.20">
    <property type="entry name" value="PAS domain"/>
    <property type="match status" value="1"/>
</dbReference>
<dbReference type="InterPro" id="IPR000595">
    <property type="entry name" value="cNMP-bd_dom"/>
</dbReference>
<dbReference type="InterPro" id="IPR018490">
    <property type="entry name" value="cNMP-bd_dom_sf"/>
</dbReference>
<dbReference type="InterPro" id="IPR005821">
    <property type="entry name" value="Ion_trans_dom"/>
</dbReference>
<dbReference type="InterPro" id="IPR003938">
    <property type="entry name" value="K_chnl_volt-dep_EAG/ELK/ERG"/>
</dbReference>
<dbReference type="InterPro" id="IPR003967">
    <property type="entry name" value="K_chnl_volt-dep_ERG"/>
</dbReference>
<dbReference type="InterPro" id="IPR050818">
    <property type="entry name" value="KCNH_animal-type"/>
</dbReference>
<dbReference type="InterPro" id="IPR001610">
    <property type="entry name" value="PAC"/>
</dbReference>
<dbReference type="InterPro" id="IPR000014">
    <property type="entry name" value="PAS"/>
</dbReference>
<dbReference type="InterPro" id="IPR000700">
    <property type="entry name" value="PAS-assoc_C"/>
</dbReference>
<dbReference type="InterPro" id="IPR035965">
    <property type="entry name" value="PAS-like_dom_sf"/>
</dbReference>
<dbReference type="InterPro" id="IPR014710">
    <property type="entry name" value="RmlC-like_jellyroll"/>
</dbReference>
<dbReference type="NCBIfam" id="TIGR00229">
    <property type="entry name" value="sensory_box"/>
    <property type="match status" value="1"/>
</dbReference>
<dbReference type="PANTHER" id="PTHR10217:SF506">
    <property type="entry name" value="POTASSIUM VOLTAGE-GATED CHANNEL SUBFAMILY H MEMBER 2"/>
    <property type="match status" value="1"/>
</dbReference>
<dbReference type="PANTHER" id="PTHR10217">
    <property type="entry name" value="VOLTAGE AND LIGAND GATED POTASSIUM CHANNEL"/>
    <property type="match status" value="1"/>
</dbReference>
<dbReference type="Pfam" id="PF00027">
    <property type="entry name" value="cNMP_binding"/>
    <property type="match status" value="1"/>
</dbReference>
<dbReference type="Pfam" id="PF00520">
    <property type="entry name" value="Ion_trans"/>
    <property type="match status" value="2"/>
</dbReference>
<dbReference type="Pfam" id="PF13426">
    <property type="entry name" value="PAS_9"/>
    <property type="match status" value="1"/>
</dbReference>
<dbReference type="PRINTS" id="PR01463">
    <property type="entry name" value="EAGCHANLFMLY"/>
</dbReference>
<dbReference type="PRINTS" id="PR01470">
    <property type="entry name" value="ERGCHANNEL"/>
</dbReference>
<dbReference type="SMART" id="SM00100">
    <property type="entry name" value="cNMP"/>
    <property type="match status" value="1"/>
</dbReference>
<dbReference type="SMART" id="SM00086">
    <property type="entry name" value="PAC"/>
    <property type="match status" value="1"/>
</dbReference>
<dbReference type="SUPFAM" id="SSF51206">
    <property type="entry name" value="cAMP-binding domain-like"/>
    <property type="match status" value="1"/>
</dbReference>
<dbReference type="SUPFAM" id="SSF55785">
    <property type="entry name" value="PYP-like sensor domain (PAS domain)"/>
    <property type="match status" value="1"/>
</dbReference>
<dbReference type="SUPFAM" id="SSF81324">
    <property type="entry name" value="Voltage-gated potassium channels"/>
    <property type="match status" value="2"/>
</dbReference>
<dbReference type="PROSITE" id="PS50042">
    <property type="entry name" value="CNMP_BINDING_3"/>
    <property type="match status" value="1"/>
</dbReference>
<dbReference type="PROSITE" id="PS50113">
    <property type="entry name" value="PAC"/>
    <property type="match status" value="1"/>
</dbReference>
<dbReference type="PROSITE" id="PS50112">
    <property type="entry name" value="PAS"/>
    <property type="match status" value="1"/>
</dbReference>
<comment type="function">
    <text evidence="3">Pore-forming (alpha) subunit of voltage-gated inwardly rectifying potassium channel. Characterized by unusual gating kinetics by producing relatively small outward currents during membrane depolarization and large inward currents during subsequent repolarization which reflect a rapid inactivation during depolarization and quick recovery from inactivation but slow deactivation (closing) during repolarization. Channel properties are modulated by cAMP and subunit assembly. Forms a stable complex with KCNE1 or KCNE2, and that this heteromultimerization regulates inward rectifier potassium channel activity.</text>
</comment>
<comment type="catalytic activity">
    <reaction evidence="3">
        <text>K(+)(in) = K(+)(out)</text>
        <dbReference type="Rhea" id="RHEA:29463"/>
        <dbReference type="ChEBI" id="CHEBI:29103"/>
    </reaction>
</comment>
<comment type="subunit">
    <text evidence="1 3">The potassium channel is probably composed of a homo- or heterotetrameric complex of pore-forming alpha subunits that can associate with modulating beta subunits. Interacts with DNAJB12 and DNAJB14; chaperones DNAJB12 and DNAJB14 promote tetramerization (By similarity). Heteromultimer with KCNH6/ERG2 and KCNH7/ERG3 (By similarity). Interacts with ALG10B (By similarity). Forms a stable complex with KCNE1 or KCNE2, and that this heteromultimerization regulates Inward rectifier potassium channel activity. Interacts with CANX. The core-glycosylated, but not the fully glycosylated form interacts with RNF207. Interacts with NDFIP1 and NDFIP2; this interaction decreases the cell membrane expression by targeting KCNH2, through interaction with NEDD4L, for the degradation through the multivesicular bodies (MVBs)-lysosomal pathway (By similarity).</text>
</comment>
<comment type="subcellular location">
    <subcellularLocation>
        <location evidence="3">Cell membrane</location>
        <topology evidence="5">Multi-pass membrane protein</topology>
    </subcellularLocation>
</comment>
<comment type="tissue specificity">
    <text evidence="10">Highly expressed in heart and brain.</text>
</comment>
<comment type="domain">
    <text evidence="3">The S4-S5 linker acts as a signal integrator where it both couples voltage-sensor domain (VSD) movement to pore opening and closure, as well as providing a binding site for other domains that regulate activation and/or deactivation of the channel.</text>
</comment>
<comment type="PTM">
    <text evidence="3">Phosphorylated on serine and threonine residues. Phosphorylation by PKA inhibits ion conduction.</text>
</comment>
<comment type="similarity">
    <text evidence="11">Belongs to the potassium channel family. H (Eag) (TC 1.A.1.20) subfamily. Kv11.1/KCNH2 sub-subfamily.</text>
</comment>